<reference key="1">
    <citation type="journal article" date="1999" name="Nature">
        <title>Sequence and analysis of chromosome 4 of the plant Arabidopsis thaliana.</title>
        <authorList>
            <person name="Mayer K.F.X."/>
            <person name="Schueller C."/>
            <person name="Wambutt R."/>
            <person name="Murphy G."/>
            <person name="Volckaert G."/>
            <person name="Pohl T."/>
            <person name="Duesterhoeft A."/>
            <person name="Stiekema W."/>
            <person name="Entian K.-D."/>
            <person name="Terryn N."/>
            <person name="Harris B."/>
            <person name="Ansorge W."/>
            <person name="Brandt P."/>
            <person name="Grivell L.A."/>
            <person name="Rieger M."/>
            <person name="Weichselgartner M."/>
            <person name="de Simone V."/>
            <person name="Obermaier B."/>
            <person name="Mache R."/>
            <person name="Mueller M."/>
            <person name="Kreis M."/>
            <person name="Delseny M."/>
            <person name="Puigdomenech P."/>
            <person name="Watson M."/>
            <person name="Schmidtheini T."/>
            <person name="Reichert B."/>
            <person name="Portetelle D."/>
            <person name="Perez-Alonso M."/>
            <person name="Boutry M."/>
            <person name="Bancroft I."/>
            <person name="Vos P."/>
            <person name="Hoheisel J."/>
            <person name="Zimmermann W."/>
            <person name="Wedler H."/>
            <person name="Ridley P."/>
            <person name="Langham S.-A."/>
            <person name="McCullagh B."/>
            <person name="Bilham L."/>
            <person name="Robben J."/>
            <person name="van der Schueren J."/>
            <person name="Grymonprez B."/>
            <person name="Chuang Y.-J."/>
            <person name="Vandenbussche F."/>
            <person name="Braeken M."/>
            <person name="Weltjens I."/>
            <person name="Voet M."/>
            <person name="Bastiaens I."/>
            <person name="Aert R."/>
            <person name="Defoor E."/>
            <person name="Weitzenegger T."/>
            <person name="Bothe G."/>
            <person name="Ramsperger U."/>
            <person name="Hilbert H."/>
            <person name="Braun M."/>
            <person name="Holzer E."/>
            <person name="Brandt A."/>
            <person name="Peters S."/>
            <person name="van Staveren M."/>
            <person name="Dirkse W."/>
            <person name="Mooijman P."/>
            <person name="Klein Lankhorst R."/>
            <person name="Rose M."/>
            <person name="Hauf J."/>
            <person name="Koetter P."/>
            <person name="Berneiser S."/>
            <person name="Hempel S."/>
            <person name="Feldpausch M."/>
            <person name="Lamberth S."/>
            <person name="Van den Daele H."/>
            <person name="De Keyser A."/>
            <person name="Buysshaert C."/>
            <person name="Gielen J."/>
            <person name="Villarroel R."/>
            <person name="De Clercq R."/>
            <person name="van Montagu M."/>
            <person name="Rogers J."/>
            <person name="Cronin A."/>
            <person name="Quail M.A."/>
            <person name="Bray-Allen S."/>
            <person name="Clark L."/>
            <person name="Doggett J."/>
            <person name="Hall S."/>
            <person name="Kay M."/>
            <person name="Lennard N."/>
            <person name="McLay K."/>
            <person name="Mayes R."/>
            <person name="Pettett A."/>
            <person name="Rajandream M.A."/>
            <person name="Lyne M."/>
            <person name="Benes V."/>
            <person name="Rechmann S."/>
            <person name="Borkova D."/>
            <person name="Bloecker H."/>
            <person name="Scharfe M."/>
            <person name="Grimm M."/>
            <person name="Loehnert T.-H."/>
            <person name="Dose S."/>
            <person name="de Haan M."/>
            <person name="Maarse A.C."/>
            <person name="Schaefer M."/>
            <person name="Mueller-Auer S."/>
            <person name="Gabel C."/>
            <person name="Fuchs M."/>
            <person name="Fartmann B."/>
            <person name="Granderath K."/>
            <person name="Dauner D."/>
            <person name="Herzl A."/>
            <person name="Neumann S."/>
            <person name="Argiriou A."/>
            <person name="Vitale D."/>
            <person name="Liguori R."/>
            <person name="Piravandi E."/>
            <person name="Massenet O."/>
            <person name="Quigley F."/>
            <person name="Clabauld G."/>
            <person name="Muendlein A."/>
            <person name="Felber R."/>
            <person name="Schnabl S."/>
            <person name="Hiller R."/>
            <person name="Schmidt W."/>
            <person name="Lecharny A."/>
            <person name="Aubourg S."/>
            <person name="Chefdor F."/>
            <person name="Cooke R."/>
            <person name="Berger C."/>
            <person name="Monfort A."/>
            <person name="Casacuberta E."/>
            <person name="Gibbons T."/>
            <person name="Weber N."/>
            <person name="Vandenbol M."/>
            <person name="Bargues M."/>
            <person name="Terol J."/>
            <person name="Torres A."/>
            <person name="Perez-Perez A."/>
            <person name="Purnelle B."/>
            <person name="Bent E."/>
            <person name="Johnson S."/>
            <person name="Tacon D."/>
            <person name="Jesse T."/>
            <person name="Heijnen L."/>
            <person name="Schwarz S."/>
            <person name="Scholler P."/>
            <person name="Heber S."/>
            <person name="Francs P."/>
            <person name="Bielke C."/>
            <person name="Frishman D."/>
            <person name="Haase D."/>
            <person name="Lemcke K."/>
            <person name="Mewes H.-W."/>
            <person name="Stocker S."/>
            <person name="Zaccaria P."/>
            <person name="Bevan M."/>
            <person name="Wilson R.K."/>
            <person name="de la Bastide M."/>
            <person name="Habermann K."/>
            <person name="Parnell L."/>
            <person name="Dedhia N."/>
            <person name="Gnoj L."/>
            <person name="Schutz K."/>
            <person name="Huang E."/>
            <person name="Spiegel L."/>
            <person name="Sekhon M."/>
            <person name="Murray J."/>
            <person name="Sheet P."/>
            <person name="Cordes M."/>
            <person name="Abu-Threideh J."/>
            <person name="Stoneking T."/>
            <person name="Kalicki J."/>
            <person name="Graves T."/>
            <person name="Harmon G."/>
            <person name="Edwards J."/>
            <person name="Latreille P."/>
            <person name="Courtney L."/>
            <person name="Cloud J."/>
            <person name="Abbott A."/>
            <person name="Scott K."/>
            <person name="Johnson D."/>
            <person name="Minx P."/>
            <person name="Bentley D."/>
            <person name="Fulton B."/>
            <person name="Miller N."/>
            <person name="Greco T."/>
            <person name="Kemp K."/>
            <person name="Kramer J."/>
            <person name="Fulton L."/>
            <person name="Mardis E."/>
            <person name="Dante M."/>
            <person name="Pepin K."/>
            <person name="Hillier L.W."/>
            <person name="Nelson J."/>
            <person name="Spieth J."/>
            <person name="Ryan E."/>
            <person name="Andrews S."/>
            <person name="Geisel C."/>
            <person name="Layman D."/>
            <person name="Du H."/>
            <person name="Ali J."/>
            <person name="Berghoff A."/>
            <person name="Jones K."/>
            <person name="Drone K."/>
            <person name="Cotton M."/>
            <person name="Joshu C."/>
            <person name="Antonoiu B."/>
            <person name="Zidanic M."/>
            <person name="Strong C."/>
            <person name="Sun H."/>
            <person name="Lamar B."/>
            <person name="Yordan C."/>
            <person name="Ma P."/>
            <person name="Zhong J."/>
            <person name="Preston R."/>
            <person name="Vil D."/>
            <person name="Shekher M."/>
            <person name="Matero A."/>
            <person name="Shah R."/>
            <person name="Swaby I.K."/>
            <person name="O'Shaughnessy A."/>
            <person name="Rodriguez M."/>
            <person name="Hoffman J."/>
            <person name="Till S."/>
            <person name="Granat S."/>
            <person name="Shohdy N."/>
            <person name="Hasegawa A."/>
            <person name="Hameed A."/>
            <person name="Lodhi M."/>
            <person name="Johnson A."/>
            <person name="Chen E."/>
            <person name="Marra M.A."/>
            <person name="Martienssen R."/>
            <person name="McCombie W.R."/>
        </authorList>
    </citation>
    <scope>NUCLEOTIDE SEQUENCE [LARGE SCALE GENOMIC DNA]</scope>
    <source>
        <strain>cv. Columbia</strain>
    </source>
</reference>
<reference key="2">
    <citation type="journal article" date="2017" name="Plant J.">
        <title>Araport11: a complete reannotation of the Arabidopsis thaliana reference genome.</title>
        <authorList>
            <person name="Cheng C.Y."/>
            <person name="Krishnakumar V."/>
            <person name="Chan A.P."/>
            <person name="Thibaud-Nissen F."/>
            <person name="Schobel S."/>
            <person name="Town C.D."/>
        </authorList>
    </citation>
    <scope>GENOME REANNOTATION</scope>
    <source>
        <strain>cv. Columbia</strain>
    </source>
</reference>
<reference key="3">
    <citation type="journal article" date="1999" name="Plant Mol. Biol.">
        <title>Analysis of Arabidopsis genome sequence reveals a large new gene family in plants.</title>
        <authorList>
            <person name="Ride J.P."/>
            <person name="Davies E.M."/>
            <person name="Franklin F.C.H."/>
            <person name="Marshall D.F."/>
        </authorList>
    </citation>
    <scope>GENE FAMILY</scope>
    <scope>NOMENCLATURE</scope>
    <source>
        <strain>cv. Columbia</strain>
    </source>
</reference>
<sequence length="161" mass="18810">MDIPKQYLSLFILIIFITTKLSQADHKNDIPVPNDPSSTNSVFPTSKRTVEINNDLGNQLTLLYHCKSKDDDLGNRTLQPGESWSFSFGRQFFGRTLYFCSFSWPNESHSFDIYKDHRDSGGDNKCESDRCVWKIRRNGPCRFNDETKQFDLCYPWNKSLY</sequence>
<protein>
    <recommendedName>
        <fullName evidence="3">S-protein homolog 2</fullName>
    </recommendedName>
</protein>
<feature type="signal peptide" evidence="1">
    <location>
        <begin position="1"/>
        <end position="24"/>
    </location>
</feature>
<feature type="chain" id="PRO_5003315485" description="S-protein homolog 2">
    <location>
        <begin position="25"/>
        <end position="161"/>
    </location>
</feature>
<feature type="glycosylation site" description="N-linked (GlcNAc...) asparagine" evidence="2">
    <location>
        <position position="75"/>
    </location>
</feature>
<feature type="glycosylation site" description="N-linked (GlcNAc...) asparagine" evidence="2">
    <location>
        <position position="106"/>
    </location>
</feature>
<feature type="glycosylation site" description="N-linked (GlcNAc...) asparagine" evidence="2">
    <location>
        <position position="157"/>
    </location>
</feature>
<evidence type="ECO:0000255" key="1"/>
<evidence type="ECO:0000255" key="2">
    <source>
        <dbReference type="PROSITE-ProRule" id="PRU00498"/>
    </source>
</evidence>
<evidence type="ECO:0000303" key="3">
    <source>
    </source>
</evidence>
<evidence type="ECO:0000305" key="4"/>
<evidence type="ECO:0000305" key="5">
    <source>
    </source>
</evidence>
<evidence type="ECO:0000312" key="6">
    <source>
        <dbReference type="Araport" id="AT4G16195"/>
    </source>
</evidence>
<organism>
    <name type="scientific">Arabidopsis thaliana</name>
    <name type="common">Mouse-ear cress</name>
    <dbReference type="NCBI Taxonomy" id="3702"/>
    <lineage>
        <taxon>Eukaryota</taxon>
        <taxon>Viridiplantae</taxon>
        <taxon>Streptophyta</taxon>
        <taxon>Embryophyta</taxon>
        <taxon>Tracheophyta</taxon>
        <taxon>Spermatophyta</taxon>
        <taxon>Magnoliopsida</taxon>
        <taxon>eudicotyledons</taxon>
        <taxon>Gunneridae</taxon>
        <taxon>Pentapetalae</taxon>
        <taxon>rosids</taxon>
        <taxon>malvids</taxon>
        <taxon>Brassicales</taxon>
        <taxon>Brassicaceae</taxon>
        <taxon>Camelineae</taxon>
        <taxon>Arabidopsis</taxon>
    </lineage>
</organism>
<proteinExistence type="inferred from homology"/>
<keyword id="KW-0325">Glycoprotein</keyword>
<keyword id="KW-1185">Reference proteome</keyword>
<keyword id="KW-0964">Secreted</keyword>
<keyword id="KW-0713">Self-incompatibility</keyword>
<keyword id="KW-0732">Signal</keyword>
<dbReference type="EMBL" id="AL117321">
    <property type="status" value="NOT_ANNOTATED_CDS"/>
    <property type="molecule type" value="Genomic_DNA"/>
</dbReference>
<dbReference type="EMBL" id="CP002687">
    <property type="protein sequence ID" value="AEE83714.1"/>
    <property type="molecule type" value="Genomic_DNA"/>
</dbReference>
<dbReference type="RefSeq" id="NP_680709.1">
    <property type="nucleotide sequence ID" value="NM_148343.1"/>
</dbReference>
<dbReference type="SMR" id="F4JLQ5"/>
<dbReference type="STRING" id="3702.F4JLQ5"/>
<dbReference type="GlyCosmos" id="F4JLQ5">
    <property type="glycosylation" value="3 sites, No reported glycans"/>
</dbReference>
<dbReference type="GlyGen" id="F4JLQ5">
    <property type="glycosylation" value="3 sites"/>
</dbReference>
<dbReference type="iPTMnet" id="F4JLQ5"/>
<dbReference type="PaxDb" id="3702-AT4G16195.1"/>
<dbReference type="ProteomicsDB" id="232485"/>
<dbReference type="EnsemblPlants" id="AT4G16195.1">
    <property type="protein sequence ID" value="AT4G16195.1"/>
    <property type="gene ID" value="AT4G16195"/>
</dbReference>
<dbReference type="GeneID" id="827312"/>
<dbReference type="Gramene" id="AT4G16195.1">
    <property type="protein sequence ID" value="AT4G16195.1"/>
    <property type="gene ID" value="AT4G16195"/>
</dbReference>
<dbReference type="KEGG" id="ath:AT4G16195"/>
<dbReference type="Araport" id="AT4G16195"/>
<dbReference type="TAIR" id="AT4G16195"/>
<dbReference type="eggNOG" id="ENOG502S7CQ">
    <property type="taxonomic scope" value="Eukaryota"/>
</dbReference>
<dbReference type="HOGENOM" id="CLU_125658_0_1_1"/>
<dbReference type="InParanoid" id="F4JLQ5"/>
<dbReference type="OMA" id="LYHCKSK"/>
<dbReference type="PhylomeDB" id="F4JLQ5"/>
<dbReference type="PRO" id="PR:F4JLQ5"/>
<dbReference type="Proteomes" id="UP000006548">
    <property type="component" value="Chromosome 4"/>
</dbReference>
<dbReference type="ExpressionAtlas" id="F4JLQ5">
    <property type="expression patterns" value="baseline and differential"/>
</dbReference>
<dbReference type="GO" id="GO:0005576">
    <property type="term" value="C:extracellular region"/>
    <property type="evidence" value="ECO:0007669"/>
    <property type="project" value="UniProtKB-SubCell"/>
</dbReference>
<dbReference type="GO" id="GO:0060320">
    <property type="term" value="P:rejection of self pollen"/>
    <property type="evidence" value="ECO:0007669"/>
    <property type="project" value="UniProtKB-KW"/>
</dbReference>
<dbReference type="InterPro" id="IPR010264">
    <property type="entry name" value="Self-incomp_S1"/>
</dbReference>
<dbReference type="PANTHER" id="PTHR31232">
    <property type="match status" value="1"/>
</dbReference>
<dbReference type="PANTHER" id="PTHR31232:SF144">
    <property type="entry name" value="S-PROTEIN HOMOLOG 2"/>
    <property type="match status" value="1"/>
</dbReference>
<dbReference type="Pfam" id="PF05938">
    <property type="entry name" value="Self-incomp_S1"/>
    <property type="match status" value="1"/>
</dbReference>
<accession>F4JLQ5</accession>
<gene>
    <name evidence="3" type="primary">SPH2</name>
    <name evidence="6" type="ordered locus">At4g16195</name>
    <name evidence="4" type="ORF">FCAALL</name>
</gene>
<comment type="subcellular location">
    <subcellularLocation>
        <location evidence="5">Secreted</location>
    </subcellularLocation>
</comment>
<comment type="similarity">
    <text evidence="4">Belongs to the plant self-incompatibility (S1) protein family.</text>
</comment>
<name>SPH2_ARATH</name>